<name>PDXA2_HALH5</name>
<gene>
    <name type="primary">pdxA</name>
    <name type="ordered locus">BH0804</name>
</gene>
<sequence length="334" mass="36632">MNKKPIIAIPMGDPAGIGPEITVGALNKKELYDVANPVVIGHGDMLEKMLPVMKADLTINRITTVDEAMFEYGTIDVIHLDNLNVAEVKMGTVQAQCGKAAFEYIRHAVQLANDKKVDALATTPINKESLKAAEVPYIGHTEMLADLTKTEDPLTMFEVHSMRIFFLTRHLSLKDAIDQMTKERVHDYLLRCDKALEKLGVKERRFAVAGLNPHSGENGLFGREEMDEITPGIELAKKDGINAVGPVPADSVFHHALNGRYDAVLSLYHDQGHIAAKMTDFERTISITNGLPFLRTSVDHGTAFDIAGKGIASTVSMEECIKLAAKYAPHFVTA</sequence>
<dbReference type="EC" id="1.1.1.408" evidence="2"/>
<dbReference type="EMBL" id="AB024550">
    <property type="protein sequence ID" value="BAA83911.1"/>
    <property type="molecule type" value="Genomic_DNA"/>
</dbReference>
<dbReference type="EMBL" id="BA000004">
    <property type="protein sequence ID" value="BAB04523.1"/>
    <property type="molecule type" value="Genomic_DNA"/>
</dbReference>
<dbReference type="PIR" id="D83750">
    <property type="entry name" value="D83750"/>
</dbReference>
<dbReference type="RefSeq" id="WP_010896977.1">
    <property type="nucleotide sequence ID" value="NC_002570.2"/>
</dbReference>
<dbReference type="SMR" id="Q9RC88"/>
<dbReference type="STRING" id="272558.gene:10726678"/>
<dbReference type="GeneID" id="87596358"/>
<dbReference type="KEGG" id="bha:BH0804"/>
<dbReference type="eggNOG" id="COG1995">
    <property type="taxonomic scope" value="Bacteria"/>
</dbReference>
<dbReference type="HOGENOM" id="CLU_040168_0_1_9"/>
<dbReference type="OrthoDB" id="9801783at2"/>
<dbReference type="Proteomes" id="UP000001258">
    <property type="component" value="Chromosome"/>
</dbReference>
<dbReference type="GO" id="GO:0046872">
    <property type="term" value="F:metal ion binding"/>
    <property type="evidence" value="ECO:0007669"/>
    <property type="project" value="UniProtKB-KW"/>
</dbReference>
<dbReference type="GO" id="GO:0051287">
    <property type="term" value="F:NAD binding"/>
    <property type="evidence" value="ECO:0007669"/>
    <property type="project" value="InterPro"/>
</dbReference>
<dbReference type="GO" id="GO:0016491">
    <property type="term" value="F:oxidoreductase activity"/>
    <property type="evidence" value="ECO:0007669"/>
    <property type="project" value="UniProtKB-KW"/>
</dbReference>
<dbReference type="Gene3D" id="3.40.718.10">
    <property type="entry name" value="Isopropylmalate Dehydrogenase"/>
    <property type="match status" value="1"/>
</dbReference>
<dbReference type="InterPro" id="IPR005255">
    <property type="entry name" value="PdxA_fam"/>
</dbReference>
<dbReference type="NCBIfam" id="TIGR00557">
    <property type="entry name" value="pdxA"/>
    <property type="match status" value="1"/>
</dbReference>
<dbReference type="NCBIfam" id="NF002992">
    <property type="entry name" value="PRK03743.1"/>
    <property type="match status" value="1"/>
</dbReference>
<dbReference type="PANTHER" id="PTHR30004">
    <property type="entry name" value="4-HYDROXYTHREONINE-4-PHOSPHATE DEHYDROGENASE"/>
    <property type="match status" value="1"/>
</dbReference>
<dbReference type="PANTHER" id="PTHR30004:SF6">
    <property type="entry name" value="D-THREONATE 4-PHOSPHATE DEHYDROGENASE"/>
    <property type="match status" value="1"/>
</dbReference>
<dbReference type="Pfam" id="PF04166">
    <property type="entry name" value="PdxA"/>
    <property type="match status" value="1"/>
</dbReference>
<dbReference type="SUPFAM" id="SSF53659">
    <property type="entry name" value="Isocitrate/Isopropylmalate dehydrogenase-like"/>
    <property type="match status" value="1"/>
</dbReference>
<comment type="function">
    <text evidence="2">Catalyzes the NAD-dependent oxidation and subsequent decarboxylation of D-threonate 4-phosphate to produce dihydroxyacetone phosphate (DHAP).</text>
</comment>
<comment type="catalytic activity">
    <reaction evidence="2">
        <text>4-O-phospho-D-threonate + NAD(+) = dihydroxyacetone phosphate + CO2 + NADH</text>
        <dbReference type="Rhea" id="RHEA:52396"/>
        <dbReference type="ChEBI" id="CHEBI:16526"/>
        <dbReference type="ChEBI" id="CHEBI:57540"/>
        <dbReference type="ChEBI" id="CHEBI:57642"/>
        <dbReference type="ChEBI" id="CHEBI:57945"/>
        <dbReference type="ChEBI" id="CHEBI:136590"/>
        <dbReference type="EC" id="1.1.1.408"/>
    </reaction>
</comment>
<comment type="cofactor">
    <cofactor evidence="1">
        <name>a divalent metal cation</name>
        <dbReference type="ChEBI" id="CHEBI:60240"/>
    </cofactor>
    <text evidence="1">Binds 1 divalent metal cation per subunit.</text>
</comment>
<comment type="subunit">
    <text evidence="2">Homodimer.</text>
</comment>
<comment type="similarity">
    <text evidence="3">Belongs to the PdxA family. PdxA2 subfamily.</text>
</comment>
<protein>
    <recommendedName>
        <fullName evidence="2">Putative D-threonate 4-phosphate dehydrogenase</fullName>
        <ecNumber evidence="2">1.1.1.408</ecNumber>
    </recommendedName>
</protein>
<feature type="chain" id="PRO_0000188797" description="Putative D-threonate 4-phosphate dehydrogenase">
    <location>
        <begin position="1"/>
        <end position="334"/>
    </location>
</feature>
<feature type="binding site" evidence="1">
    <location>
        <position position="140"/>
    </location>
    <ligand>
        <name>substrate</name>
    </ligand>
</feature>
<feature type="binding site" evidence="1">
    <location>
        <position position="141"/>
    </location>
    <ligand>
        <name>substrate</name>
    </ligand>
</feature>
<feature type="binding site" evidence="1">
    <location>
        <position position="170"/>
    </location>
    <ligand>
        <name>a divalent metal cation</name>
        <dbReference type="ChEBI" id="CHEBI:60240"/>
        <note>ligand shared between dimeric partners</note>
    </ligand>
</feature>
<feature type="binding site" evidence="1">
    <location>
        <position position="214"/>
    </location>
    <ligand>
        <name>a divalent metal cation</name>
        <dbReference type="ChEBI" id="CHEBI:60240"/>
        <note>ligand shared between dimeric partners</note>
    </ligand>
</feature>
<feature type="binding site" evidence="1">
    <location>
        <position position="269"/>
    </location>
    <ligand>
        <name>a divalent metal cation</name>
        <dbReference type="ChEBI" id="CHEBI:60240"/>
        <note>ligand shared between dimeric partners</note>
    </ligand>
</feature>
<feature type="binding site" evidence="1">
    <location>
        <position position="277"/>
    </location>
    <ligand>
        <name>substrate</name>
    </ligand>
</feature>
<feature type="binding site" evidence="1">
    <location>
        <position position="295"/>
    </location>
    <ligand>
        <name>substrate</name>
    </ligand>
</feature>
<accession>Q9RC88</accession>
<reference key="1">
    <citation type="journal article" date="1999" name="Extremophiles">
        <title>Genetic analysis of the chromosome of alkaliphilic Bacillus halodurans C-125.</title>
        <authorList>
            <person name="Takami H."/>
            <person name="Takaki Y."/>
            <person name="Nakasone K."/>
            <person name="Sakiyama T."/>
            <person name="Maeno G."/>
            <person name="Sasaki R."/>
            <person name="Hirama C."/>
            <person name="Fuji F."/>
            <person name="Masui N."/>
        </authorList>
    </citation>
    <scope>NUCLEOTIDE SEQUENCE [GENOMIC DNA]</scope>
    <source>
        <strain>ATCC BAA-125 / DSM 18197 / FERM 7344 / JCM 9153 / C-125</strain>
    </source>
</reference>
<reference key="2">
    <citation type="journal article" date="2000" name="Nucleic Acids Res.">
        <title>Complete genome sequence of the alkaliphilic bacterium Bacillus halodurans and genomic sequence comparison with Bacillus subtilis.</title>
        <authorList>
            <person name="Takami H."/>
            <person name="Nakasone K."/>
            <person name="Takaki Y."/>
            <person name="Maeno G."/>
            <person name="Sasaki R."/>
            <person name="Masui N."/>
            <person name="Fuji F."/>
            <person name="Hirama C."/>
            <person name="Nakamura Y."/>
            <person name="Ogasawara N."/>
            <person name="Kuhara S."/>
            <person name="Horikoshi K."/>
        </authorList>
    </citation>
    <scope>NUCLEOTIDE SEQUENCE [LARGE SCALE GENOMIC DNA]</scope>
    <source>
        <strain>ATCC BAA-125 / DSM 18197 / FERM 7344 / JCM 9153 / C-125</strain>
    </source>
</reference>
<proteinExistence type="inferred from homology"/>
<organism>
    <name type="scientific">Halalkalibacterium halodurans (strain ATCC BAA-125 / DSM 18197 / FERM 7344 / JCM 9153 / C-125)</name>
    <name type="common">Bacillus halodurans</name>
    <dbReference type="NCBI Taxonomy" id="272558"/>
    <lineage>
        <taxon>Bacteria</taxon>
        <taxon>Bacillati</taxon>
        <taxon>Bacillota</taxon>
        <taxon>Bacilli</taxon>
        <taxon>Bacillales</taxon>
        <taxon>Bacillaceae</taxon>
        <taxon>Halalkalibacterium (ex Joshi et al. 2022)</taxon>
    </lineage>
</organism>
<keyword id="KW-0119">Carbohydrate metabolism</keyword>
<keyword id="KW-0479">Metal-binding</keyword>
<keyword id="KW-0520">NAD</keyword>
<keyword id="KW-0560">Oxidoreductase</keyword>
<keyword id="KW-1185">Reference proteome</keyword>
<evidence type="ECO:0000250" key="1">
    <source>
        <dbReference type="UniProtKB" id="P19624"/>
    </source>
</evidence>
<evidence type="ECO:0000250" key="2">
    <source>
        <dbReference type="UniProtKB" id="P58718"/>
    </source>
</evidence>
<evidence type="ECO:0000305" key="3"/>